<gene>
    <name type="primary">ybcV</name>
    <name type="ordered locus">b0558</name>
    <name type="ordered locus">JW5081</name>
</gene>
<evidence type="ECO:0000305" key="1"/>
<reference key="1">
    <citation type="submission" date="1997-01" db="EMBL/GenBank/DDBJ databases">
        <title>Sequence of minutes 4-25 of Escherichia coli.</title>
        <authorList>
            <person name="Chung E."/>
            <person name="Allen E."/>
            <person name="Araujo R."/>
            <person name="Aparicio A.M."/>
            <person name="Davis K."/>
            <person name="Duncan M."/>
            <person name="Federspiel N."/>
            <person name="Hyman R."/>
            <person name="Kalman S."/>
            <person name="Komp C."/>
            <person name="Kurdi O."/>
            <person name="Lew H."/>
            <person name="Lin D."/>
            <person name="Namath A."/>
            <person name="Oefner P."/>
            <person name="Roberts D."/>
            <person name="Schramm S."/>
            <person name="Davis R.W."/>
        </authorList>
    </citation>
    <scope>NUCLEOTIDE SEQUENCE [LARGE SCALE GENOMIC DNA]</scope>
    <source>
        <strain>K12 / MG1655 / ATCC 47076</strain>
    </source>
</reference>
<reference key="2">
    <citation type="journal article" date="1997" name="Science">
        <title>The complete genome sequence of Escherichia coli K-12.</title>
        <authorList>
            <person name="Blattner F.R."/>
            <person name="Plunkett G. III"/>
            <person name="Bloch C.A."/>
            <person name="Perna N.T."/>
            <person name="Burland V."/>
            <person name="Riley M."/>
            <person name="Collado-Vides J."/>
            <person name="Glasner J.D."/>
            <person name="Rode C.K."/>
            <person name="Mayhew G.F."/>
            <person name="Gregor J."/>
            <person name="Davis N.W."/>
            <person name="Kirkpatrick H.A."/>
            <person name="Goeden M.A."/>
            <person name="Rose D.J."/>
            <person name="Mau B."/>
            <person name="Shao Y."/>
        </authorList>
    </citation>
    <scope>NUCLEOTIDE SEQUENCE [LARGE SCALE GENOMIC DNA]</scope>
    <source>
        <strain>K12 / MG1655 / ATCC 47076</strain>
    </source>
</reference>
<reference key="3">
    <citation type="journal article" date="2006" name="Mol. Syst. Biol.">
        <title>Highly accurate genome sequences of Escherichia coli K-12 strains MG1655 and W3110.</title>
        <authorList>
            <person name="Hayashi K."/>
            <person name="Morooka N."/>
            <person name="Yamamoto Y."/>
            <person name="Fujita K."/>
            <person name="Isono K."/>
            <person name="Choi S."/>
            <person name="Ohtsubo E."/>
            <person name="Baba T."/>
            <person name="Wanner B.L."/>
            <person name="Mori H."/>
            <person name="Horiuchi T."/>
        </authorList>
    </citation>
    <scope>NUCLEOTIDE SEQUENCE [LARGE SCALE GENOMIC DNA]</scope>
    <source>
        <strain>K12 / W3110 / ATCC 27325 / DSM 5911</strain>
    </source>
</reference>
<name>YBCV_ECOLI</name>
<dbReference type="EMBL" id="U82598">
    <property type="protein sequence ID" value="AAB40754.1"/>
    <property type="status" value="ALT_INIT"/>
    <property type="molecule type" value="Genomic_DNA"/>
</dbReference>
<dbReference type="EMBL" id="U00096">
    <property type="protein sequence ID" value="AAC73659.2"/>
    <property type="molecule type" value="Genomic_DNA"/>
</dbReference>
<dbReference type="EMBL" id="AP009048">
    <property type="protein sequence ID" value="BAE76334.1"/>
    <property type="molecule type" value="Genomic_DNA"/>
</dbReference>
<dbReference type="PIR" id="D64788">
    <property type="entry name" value="D64788"/>
</dbReference>
<dbReference type="RefSeq" id="NP_415090.2">
    <property type="nucleotide sequence ID" value="NC_000913.3"/>
</dbReference>
<dbReference type="RefSeq" id="WP_000079503.1">
    <property type="nucleotide sequence ID" value="NZ_JACEFS010000069.1"/>
</dbReference>
<dbReference type="SMR" id="P77598"/>
<dbReference type="BioGRID" id="4262823">
    <property type="interactions" value="19"/>
</dbReference>
<dbReference type="DIP" id="DIP-11339N"/>
<dbReference type="FunCoup" id="P77598">
    <property type="interactions" value="31"/>
</dbReference>
<dbReference type="STRING" id="511145.b0558"/>
<dbReference type="PaxDb" id="511145-b0558"/>
<dbReference type="EnsemblBacteria" id="AAC73659">
    <property type="protein sequence ID" value="AAC73659"/>
    <property type="gene ID" value="b0558"/>
</dbReference>
<dbReference type="GeneID" id="945178"/>
<dbReference type="KEGG" id="ecj:JW5081"/>
<dbReference type="KEGG" id="eco:b0558"/>
<dbReference type="KEGG" id="ecoc:C3026_02760"/>
<dbReference type="PATRIC" id="fig|511145.12.peg.581"/>
<dbReference type="EchoBASE" id="EB3402"/>
<dbReference type="eggNOG" id="COG5562">
    <property type="taxonomic scope" value="Bacteria"/>
</dbReference>
<dbReference type="HOGENOM" id="CLU_129752_0_0_6"/>
<dbReference type="InParanoid" id="P77598"/>
<dbReference type="OMA" id="WVTNIQE"/>
<dbReference type="OrthoDB" id="6628429at2"/>
<dbReference type="PhylomeDB" id="P77598"/>
<dbReference type="BioCyc" id="EcoCyc:G6313-MONOMER"/>
<dbReference type="PRO" id="PR:P77598"/>
<dbReference type="Proteomes" id="UP000000625">
    <property type="component" value="Chromosome"/>
</dbReference>
<dbReference type="Gene3D" id="3.30.1810.10">
    <property type="entry name" value="YdfO-like"/>
    <property type="match status" value="1"/>
</dbReference>
<dbReference type="InterPro" id="IPR009833">
    <property type="entry name" value="DUF1398"/>
</dbReference>
<dbReference type="InterPro" id="IPR036696">
    <property type="entry name" value="YdfO-like_sf"/>
</dbReference>
<dbReference type="Pfam" id="PF07166">
    <property type="entry name" value="DUF1398"/>
    <property type="match status" value="1"/>
</dbReference>
<dbReference type="SUPFAM" id="SSF160419">
    <property type="entry name" value="YdfO-like"/>
    <property type="match status" value="1"/>
</dbReference>
<organism>
    <name type="scientific">Escherichia coli (strain K12)</name>
    <dbReference type="NCBI Taxonomy" id="83333"/>
    <lineage>
        <taxon>Bacteria</taxon>
        <taxon>Pseudomonadati</taxon>
        <taxon>Pseudomonadota</taxon>
        <taxon>Gammaproteobacteria</taxon>
        <taxon>Enterobacterales</taxon>
        <taxon>Enterobacteriaceae</taxon>
        <taxon>Escherichia</taxon>
    </lineage>
</organism>
<feature type="chain" id="PRO_0000168656" description="Uncharacterized protein YbcV">
    <location>
        <begin position="1"/>
        <end position="136"/>
    </location>
</feature>
<sequence length="136" mass="16414">MAQVAIFKEIFDQVRKDLNCELFYSELKRHNVSHYIYYLATDNIHIVLENDNTVLIKGLKKVVNVKFSRNTHLIETSYDRLKSREITFQQYRENLAKAGVFRWITNIHEHKRYYYTFDNSLLFTESIQNTTQIFPR</sequence>
<accession>P77598</accession>
<accession>Q2MBM2</accession>
<comment type="miscellaneous">
    <text>Encoded by the cryptic lambdoid prophage DLP12.</text>
</comment>
<comment type="similarity">
    <text evidence="1">To E.coli YcgX and YdfO.</text>
</comment>
<comment type="sequence caution" evidence="1">
    <conflict type="erroneous initiation">
        <sequence resource="EMBL-CDS" id="AAB40754"/>
    </conflict>
</comment>
<keyword id="KW-1185">Reference proteome</keyword>
<proteinExistence type="predicted"/>
<protein>
    <recommendedName>
        <fullName>Uncharacterized protein YbcV</fullName>
    </recommendedName>
</protein>